<sequence length="120" mass="13773">MERYRLPKTAFVRKGWEYDAVYRGGRRLHGVGFTIIYLLNSTENNRLGISVHRKLRGAVKRNRIKRIIRECFRLHRDIFPQKADIVFAVRPGFALSSPEQIRQAVGSLCGTPCGVCNEKA</sequence>
<evidence type="ECO:0000255" key="1">
    <source>
        <dbReference type="HAMAP-Rule" id="MF_00227"/>
    </source>
</evidence>
<name>RNPA_DESPS</name>
<reference key="1">
    <citation type="journal article" date="2004" name="Environ. Microbiol.">
        <title>The genome of Desulfotalea psychrophila, a sulfate-reducing bacterium from permanently cold Arctic sediments.</title>
        <authorList>
            <person name="Rabus R."/>
            <person name="Ruepp A."/>
            <person name="Frickey T."/>
            <person name="Rattei T."/>
            <person name="Fartmann B."/>
            <person name="Stark M."/>
            <person name="Bauer M."/>
            <person name="Zibat A."/>
            <person name="Lombardot T."/>
            <person name="Becker I."/>
            <person name="Amann J."/>
            <person name="Gellner K."/>
            <person name="Teeling H."/>
            <person name="Leuschner W.D."/>
            <person name="Gloeckner F.-O."/>
            <person name="Lupas A.N."/>
            <person name="Amann R."/>
            <person name="Klenk H.-P."/>
        </authorList>
    </citation>
    <scope>NUCLEOTIDE SEQUENCE [LARGE SCALE GENOMIC DNA]</scope>
    <source>
        <strain>DSM 12343 / LSv54</strain>
    </source>
</reference>
<accession>Q6APZ0</accession>
<organism>
    <name type="scientific">Desulfotalea psychrophila (strain LSv54 / DSM 12343)</name>
    <dbReference type="NCBI Taxonomy" id="177439"/>
    <lineage>
        <taxon>Bacteria</taxon>
        <taxon>Pseudomonadati</taxon>
        <taxon>Thermodesulfobacteriota</taxon>
        <taxon>Desulfobulbia</taxon>
        <taxon>Desulfobulbales</taxon>
        <taxon>Desulfocapsaceae</taxon>
        <taxon>Desulfotalea</taxon>
    </lineage>
</organism>
<proteinExistence type="inferred from homology"/>
<feature type="chain" id="PRO_0000198457" description="Ribonuclease P protein component">
    <location>
        <begin position="1"/>
        <end position="120"/>
    </location>
</feature>
<keyword id="KW-0255">Endonuclease</keyword>
<keyword id="KW-0378">Hydrolase</keyword>
<keyword id="KW-0540">Nuclease</keyword>
<keyword id="KW-1185">Reference proteome</keyword>
<keyword id="KW-0694">RNA-binding</keyword>
<keyword id="KW-0819">tRNA processing</keyword>
<dbReference type="EC" id="3.1.26.5" evidence="1"/>
<dbReference type="EMBL" id="CR522870">
    <property type="protein sequence ID" value="CAG35583.1"/>
    <property type="molecule type" value="Genomic_DNA"/>
</dbReference>
<dbReference type="SMR" id="Q6APZ0"/>
<dbReference type="STRING" id="177439.DP0854"/>
<dbReference type="KEGG" id="dps:DP0854"/>
<dbReference type="eggNOG" id="COG0594">
    <property type="taxonomic scope" value="Bacteria"/>
</dbReference>
<dbReference type="HOGENOM" id="CLU_117179_9_3_7"/>
<dbReference type="OrthoDB" id="9810867at2"/>
<dbReference type="Proteomes" id="UP000000602">
    <property type="component" value="Chromosome"/>
</dbReference>
<dbReference type="GO" id="GO:0030677">
    <property type="term" value="C:ribonuclease P complex"/>
    <property type="evidence" value="ECO:0007669"/>
    <property type="project" value="TreeGrafter"/>
</dbReference>
<dbReference type="GO" id="GO:0042781">
    <property type="term" value="F:3'-tRNA processing endoribonuclease activity"/>
    <property type="evidence" value="ECO:0007669"/>
    <property type="project" value="TreeGrafter"/>
</dbReference>
<dbReference type="GO" id="GO:0004526">
    <property type="term" value="F:ribonuclease P activity"/>
    <property type="evidence" value="ECO:0007669"/>
    <property type="project" value="UniProtKB-UniRule"/>
</dbReference>
<dbReference type="GO" id="GO:0000049">
    <property type="term" value="F:tRNA binding"/>
    <property type="evidence" value="ECO:0007669"/>
    <property type="project" value="UniProtKB-UniRule"/>
</dbReference>
<dbReference type="GO" id="GO:0001682">
    <property type="term" value="P:tRNA 5'-leader removal"/>
    <property type="evidence" value="ECO:0007669"/>
    <property type="project" value="UniProtKB-UniRule"/>
</dbReference>
<dbReference type="Gene3D" id="3.30.230.10">
    <property type="match status" value="1"/>
</dbReference>
<dbReference type="HAMAP" id="MF_00227">
    <property type="entry name" value="RNase_P"/>
    <property type="match status" value="1"/>
</dbReference>
<dbReference type="InterPro" id="IPR020568">
    <property type="entry name" value="Ribosomal_Su5_D2-typ_SF"/>
</dbReference>
<dbReference type="InterPro" id="IPR014721">
    <property type="entry name" value="Ribsml_uS5_D2-typ_fold_subgr"/>
</dbReference>
<dbReference type="InterPro" id="IPR000100">
    <property type="entry name" value="RNase_P"/>
</dbReference>
<dbReference type="InterPro" id="IPR020539">
    <property type="entry name" value="RNase_P_CS"/>
</dbReference>
<dbReference type="NCBIfam" id="TIGR00188">
    <property type="entry name" value="rnpA"/>
    <property type="match status" value="1"/>
</dbReference>
<dbReference type="PANTHER" id="PTHR33992">
    <property type="entry name" value="RIBONUCLEASE P PROTEIN COMPONENT"/>
    <property type="match status" value="1"/>
</dbReference>
<dbReference type="PANTHER" id="PTHR33992:SF1">
    <property type="entry name" value="RIBONUCLEASE P PROTEIN COMPONENT"/>
    <property type="match status" value="1"/>
</dbReference>
<dbReference type="Pfam" id="PF00825">
    <property type="entry name" value="Ribonuclease_P"/>
    <property type="match status" value="1"/>
</dbReference>
<dbReference type="SUPFAM" id="SSF54211">
    <property type="entry name" value="Ribosomal protein S5 domain 2-like"/>
    <property type="match status" value="1"/>
</dbReference>
<dbReference type="PROSITE" id="PS00648">
    <property type="entry name" value="RIBONUCLEASE_P"/>
    <property type="match status" value="1"/>
</dbReference>
<comment type="function">
    <text evidence="1">RNaseP catalyzes the removal of the 5'-leader sequence from pre-tRNA to produce the mature 5'-terminus. It can also cleave other RNA substrates such as 4.5S RNA. The protein component plays an auxiliary but essential role in vivo by binding to the 5'-leader sequence and broadening the substrate specificity of the ribozyme.</text>
</comment>
<comment type="catalytic activity">
    <reaction evidence="1">
        <text>Endonucleolytic cleavage of RNA, removing 5'-extranucleotides from tRNA precursor.</text>
        <dbReference type="EC" id="3.1.26.5"/>
    </reaction>
</comment>
<comment type="subunit">
    <text evidence="1">Consists of a catalytic RNA component (M1 or rnpB) and a protein subunit.</text>
</comment>
<comment type="similarity">
    <text evidence="1">Belongs to the RnpA family.</text>
</comment>
<protein>
    <recommendedName>
        <fullName evidence="1">Ribonuclease P protein component</fullName>
        <shortName evidence="1">RNase P protein</shortName>
        <shortName evidence="1">RNaseP protein</shortName>
        <ecNumber evidence="1">3.1.26.5</ecNumber>
    </recommendedName>
    <alternativeName>
        <fullName evidence="1">Protein C5</fullName>
    </alternativeName>
</protein>
<gene>
    <name evidence="1" type="primary">rnpA</name>
    <name type="ordered locus">DP0854</name>
</gene>